<evidence type="ECO:0000255" key="1">
    <source>
        <dbReference type="HAMAP-Rule" id="MF_00009"/>
    </source>
</evidence>
<sequence length="167" mass="19885">MINVEIVRNYNKWREHKQINKSLIKKITQNILLRFDNFSKIKQFELSILLTNAAEILTLNKQFRNIEKATNVLSFPSNELNWQDLYSKLEFLGDSDYMHLGDIAFCYEVIYNESCEQHKTFENHFIHLLIHSILHLIGFDHQNDTEANIMENLEIEILSYFGIFPPY</sequence>
<reference key="1">
    <citation type="journal article" date="2009" name="PLoS ONE">
        <title>Genome sequence of the endosymbiont Rickettsia peacockii and comparison with virulent Rickettsia rickettsii: identification of virulence factors.</title>
        <authorList>
            <person name="Felsheim R.F."/>
            <person name="Kurtti T.J."/>
            <person name="Munderloh U.G."/>
        </authorList>
    </citation>
    <scope>NUCLEOTIDE SEQUENCE [LARGE SCALE GENOMIC DNA]</scope>
    <source>
        <strain>Rustic</strain>
    </source>
</reference>
<organism>
    <name type="scientific">Rickettsia peacockii (strain Rustic)</name>
    <dbReference type="NCBI Taxonomy" id="562019"/>
    <lineage>
        <taxon>Bacteria</taxon>
        <taxon>Pseudomonadati</taxon>
        <taxon>Pseudomonadota</taxon>
        <taxon>Alphaproteobacteria</taxon>
        <taxon>Rickettsiales</taxon>
        <taxon>Rickettsiaceae</taxon>
        <taxon>Rickettsieae</taxon>
        <taxon>Rickettsia</taxon>
        <taxon>spotted fever group</taxon>
    </lineage>
</organism>
<protein>
    <recommendedName>
        <fullName evidence="1">Endoribonuclease YbeY</fullName>
        <ecNumber evidence="1">3.1.-.-</ecNumber>
    </recommendedName>
</protein>
<feature type="chain" id="PRO_1000201745" description="Endoribonuclease YbeY">
    <location>
        <begin position="1"/>
        <end position="167"/>
    </location>
</feature>
<feature type="binding site" evidence="1">
    <location>
        <position position="131"/>
    </location>
    <ligand>
        <name>Zn(2+)</name>
        <dbReference type="ChEBI" id="CHEBI:29105"/>
        <note>catalytic</note>
    </ligand>
</feature>
<feature type="binding site" evidence="1">
    <location>
        <position position="135"/>
    </location>
    <ligand>
        <name>Zn(2+)</name>
        <dbReference type="ChEBI" id="CHEBI:29105"/>
        <note>catalytic</note>
    </ligand>
</feature>
<feature type="binding site" evidence="1">
    <location>
        <position position="141"/>
    </location>
    <ligand>
        <name>Zn(2+)</name>
        <dbReference type="ChEBI" id="CHEBI:29105"/>
        <note>catalytic</note>
    </ligand>
</feature>
<keyword id="KW-0963">Cytoplasm</keyword>
<keyword id="KW-0255">Endonuclease</keyword>
<keyword id="KW-0378">Hydrolase</keyword>
<keyword id="KW-0479">Metal-binding</keyword>
<keyword id="KW-0540">Nuclease</keyword>
<keyword id="KW-0690">Ribosome biogenesis</keyword>
<keyword id="KW-0698">rRNA processing</keyword>
<keyword id="KW-0862">Zinc</keyword>
<proteinExistence type="inferred from homology"/>
<gene>
    <name evidence="1" type="primary">ybeY</name>
    <name type="ordered locus">RPR_03280</name>
</gene>
<name>YBEY_RICPU</name>
<accession>C4K1I1</accession>
<dbReference type="EC" id="3.1.-.-" evidence="1"/>
<dbReference type="EMBL" id="CP001227">
    <property type="protein sequence ID" value="ACR47432.1"/>
    <property type="molecule type" value="Genomic_DNA"/>
</dbReference>
<dbReference type="RefSeq" id="WP_010977713.1">
    <property type="nucleotide sequence ID" value="NC_012730.1"/>
</dbReference>
<dbReference type="SMR" id="C4K1I1"/>
<dbReference type="GeneID" id="34513734"/>
<dbReference type="GeneID" id="928292"/>
<dbReference type="KEGG" id="rpk:RPR_03280"/>
<dbReference type="HOGENOM" id="CLU_106710_0_0_5"/>
<dbReference type="Proteomes" id="UP000005015">
    <property type="component" value="Chromosome"/>
</dbReference>
<dbReference type="GO" id="GO:0005737">
    <property type="term" value="C:cytoplasm"/>
    <property type="evidence" value="ECO:0007669"/>
    <property type="project" value="UniProtKB-SubCell"/>
</dbReference>
<dbReference type="GO" id="GO:0004222">
    <property type="term" value="F:metalloendopeptidase activity"/>
    <property type="evidence" value="ECO:0007669"/>
    <property type="project" value="InterPro"/>
</dbReference>
<dbReference type="GO" id="GO:0004521">
    <property type="term" value="F:RNA endonuclease activity"/>
    <property type="evidence" value="ECO:0007669"/>
    <property type="project" value="UniProtKB-UniRule"/>
</dbReference>
<dbReference type="GO" id="GO:0008270">
    <property type="term" value="F:zinc ion binding"/>
    <property type="evidence" value="ECO:0007669"/>
    <property type="project" value="UniProtKB-UniRule"/>
</dbReference>
<dbReference type="GO" id="GO:0006364">
    <property type="term" value="P:rRNA processing"/>
    <property type="evidence" value="ECO:0007669"/>
    <property type="project" value="UniProtKB-UniRule"/>
</dbReference>
<dbReference type="Gene3D" id="3.40.390.30">
    <property type="entry name" value="Metalloproteases ('zincins'), catalytic domain"/>
    <property type="match status" value="1"/>
</dbReference>
<dbReference type="HAMAP" id="MF_00009">
    <property type="entry name" value="Endoribonucl_YbeY"/>
    <property type="match status" value="1"/>
</dbReference>
<dbReference type="InterPro" id="IPR023091">
    <property type="entry name" value="MetalPrtase_cat_dom_sf_prd"/>
</dbReference>
<dbReference type="InterPro" id="IPR002036">
    <property type="entry name" value="YbeY"/>
</dbReference>
<dbReference type="InterPro" id="IPR020549">
    <property type="entry name" value="YbeY_CS"/>
</dbReference>
<dbReference type="NCBIfam" id="TIGR00043">
    <property type="entry name" value="rRNA maturation RNase YbeY"/>
    <property type="match status" value="1"/>
</dbReference>
<dbReference type="PANTHER" id="PTHR46986">
    <property type="entry name" value="ENDORIBONUCLEASE YBEY, CHLOROPLASTIC"/>
    <property type="match status" value="1"/>
</dbReference>
<dbReference type="PANTHER" id="PTHR46986:SF1">
    <property type="entry name" value="ENDORIBONUCLEASE YBEY, CHLOROPLASTIC"/>
    <property type="match status" value="1"/>
</dbReference>
<dbReference type="Pfam" id="PF02130">
    <property type="entry name" value="YbeY"/>
    <property type="match status" value="1"/>
</dbReference>
<dbReference type="SUPFAM" id="SSF55486">
    <property type="entry name" value="Metalloproteases ('zincins'), catalytic domain"/>
    <property type="match status" value="1"/>
</dbReference>
<dbReference type="PROSITE" id="PS01306">
    <property type="entry name" value="UPF0054"/>
    <property type="match status" value="1"/>
</dbReference>
<comment type="function">
    <text evidence="1">Single strand-specific metallo-endoribonuclease involved in late-stage 70S ribosome quality control and in maturation of the 3' terminus of the 16S rRNA.</text>
</comment>
<comment type="cofactor">
    <cofactor evidence="1">
        <name>Zn(2+)</name>
        <dbReference type="ChEBI" id="CHEBI:29105"/>
    </cofactor>
    <text evidence="1">Binds 1 zinc ion.</text>
</comment>
<comment type="subcellular location">
    <subcellularLocation>
        <location evidence="1">Cytoplasm</location>
    </subcellularLocation>
</comment>
<comment type="similarity">
    <text evidence="1">Belongs to the endoribonuclease YbeY family.</text>
</comment>